<gene>
    <name type="ordered locus">Rv1403c</name>
    <name type="ORF">MTCY21B4.20c</name>
</gene>
<organism>
    <name type="scientific">Mycobacterium tuberculosis (strain ATCC 25618 / H37Rv)</name>
    <dbReference type="NCBI Taxonomy" id="83332"/>
    <lineage>
        <taxon>Bacteria</taxon>
        <taxon>Bacillati</taxon>
        <taxon>Actinomycetota</taxon>
        <taxon>Actinomycetes</taxon>
        <taxon>Mycobacteriales</taxon>
        <taxon>Mycobacteriaceae</taxon>
        <taxon>Mycobacterium</taxon>
        <taxon>Mycobacterium tuberculosis complex</taxon>
    </lineage>
</organism>
<keyword id="KW-1185">Reference proteome</keyword>
<keyword id="KW-0732">Signal</keyword>
<accession>P9WLY9</accession>
<accession>L0T6R8</accession>
<accession>P64839</accession>
<accession>P71671</accession>
<dbReference type="EMBL" id="AL123456">
    <property type="protein sequence ID" value="CCP44162.1"/>
    <property type="molecule type" value="Genomic_DNA"/>
</dbReference>
<dbReference type="PIR" id="H70900">
    <property type="entry name" value="H70900"/>
</dbReference>
<dbReference type="RefSeq" id="NP_215919.1">
    <property type="nucleotide sequence ID" value="NC_000962.3"/>
</dbReference>
<dbReference type="RefSeq" id="WP_003407292.1">
    <property type="nucleotide sequence ID" value="NZ_NVQJ01000038.1"/>
</dbReference>
<dbReference type="SMR" id="P9WLY9"/>
<dbReference type="STRING" id="83332.Rv1403c"/>
<dbReference type="PaxDb" id="83332-Rv1403c"/>
<dbReference type="DNASU" id="886717"/>
<dbReference type="GeneID" id="886717"/>
<dbReference type="KEGG" id="mtu:Rv1403c"/>
<dbReference type="KEGG" id="mtv:RVBD_1403c"/>
<dbReference type="TubercuList" id="Rv1403c"/>
<dbReference type="eggNOG" id="COG2226">
    <property type="taxonomic scope" value="Bacteria"/>
</dbReference>
<dbReference type="InParanoid" id="P9WLY9"/>
<dbReference type="OrthoDB" id="9795634at2"/>
<dbReference type="PhylomeDB" id="P9WLY9"/>
<dbReference type="Proteomes" id="UP000001584">
    <property type="component" value="Chromosome"/>
</dbReference>
<dbReference type="GO" id="GO:0008168">
    <property type="term" value="F:methyltransferase activity"/>
    <property type="evidence" value="ECO:0000318"/>
    <property type="project" value="GO_Central"/>
</dbReference>
<dbReference type="CDD" id="cd02440">
    <property type="entry name" value="AdoMet_MTases"/>
    <property type="match status" value="1"/>
</dbReference>
<dbReference type="Gene3D" id="3.40.50.150">
    <property type="entry name" value="Vaccinia Virus protein VP39"/>
    <property type="match status" value="1"/>
</dbReference>
<dbReference type="InterPro" id="IPR041698">
    <property type="entry name" value="Methyltransf_25"/>
</dbReference>
<dbReference type="InterPro" id="IPR029063">
    <property type="entry name" value="SAM-dependent_MTases_sf"/>
</dbReference>
<dbReference type="PANTHER" id="PTHR43591:SF24">
    <property type="entry name" value="2-METHOXY-6-POLYPRENYL-1,4-BENZOQUINOL METHYLASE, MITOCHONDRIAL"/>
    <property type="match status" value="1"/>
</dbReference>
<dbReference type="PANTHER" id="PTHR43591">
    <property type="entry name" value="METHYLTRANSFERASE"/>
    <property type="match status" value="1"/>
</dbReference>
<dbReference type="Pfam" id="PF13649">
    <property type="entry name" value="Methyltransf_25"/>
    <property type="match status" value="1"/>
</dbReference>
<dbReference type="SUPFAM" id="SSF53335">
    <property type="entry name" value="S-adenosyl-L-methionine-dependent methyltransferases"/>
    <property type="match status" value="1"/>
</dbReference>
<sequence>MTVYTPTSERQAPATTHRQMWALGDYAAIAEELLAPLGPILVSTSGIRRGDRVLDVAAGSGNVSIPAAMAGAHVTASDLTPELLRRAQARAAAAGLELGWREANAEALPFSAGEFDAVLSTIGVMFAPRHQRTADELARVCRRGGKISTLNWTPEGFYGKLLSTIRPYRPTLPAGAPHEVWWGSEDYVSGLFRDHVSDIRTRRGSLTVDRFGCPDECRDYFKNFYGPAINAYRSIADSPECVATLDAEITELCREYLCDGVMQWEYLIFTARKC</sequence>
<feature type="signal peptide" evidence="1">
    <location>
        <begin position="1"/>
        <end position="30"/>
    </location>
</feature>
<feature type="chain" id="PRO_0000014101" description="Uncharacterized protein Rv1403c">
    <location>
        <begin position="31"/>
        <end position="274"/>
    </location>
</feature>
<protein>
    <recommendedName>
        <fullName>Uncharacterized protein Rv1403c</fullName>
    </recommendedName>
</protein>
<name>Y1403_MYCTU</name>
<proteinExistence type="inferred from homology"/>
<reference key="1">
    <citation type="journal article" date="1998" name="Nature">
        <title>Deciphering the biology of Mycobacterium tuberculosis from the complete genome sequence.</title>
        <authorList>
            <person name="Cole S.T."/>
            <person name="Brosch R."/>
            <person name="Parkhill J."/>
            <person name="Garnier T."/>
            <person name="Churcher C.M."/>
            <person name="Harris D.E."/>
            <person name="Gordon S.V."/>
            <person name="Eiglmeier K."/>
            <person name="Gas S."/>
            <person name="Barry C.E. III"/>
            <person name="Tekaia F."/>
            <person name="Badcock K."/>
            <person name="Basham D."/>
            <person name="Brown D."/>
            <person name="Chillingworth T."/>
            <person name="Connor R."/>
            <person name="Davies R.M."/>
            <person name="Devlin K."/>
            <person name="Feltwell T."/>
            <person name="Gentles S."/>
            <person name="Hamlin N."/>
            <person name="Holroyd S."/>
            <person name="Hornsby T."/>
            <person name="Jagels K."/>
            <person name="Krogh A."/>
            <person name="McLean J."/>
            <person name="Moule S."/>
            <person name="Murphy L.D."/>
            <person name="Oliver S."/>
            <person name="Osborne J."/>
            <person name="Quail M.A."/>
            <person name="Rajandream M.A."/>
            <person name="Rogers J."/>
            <person name="Rutter S."/>
            <person name="Seeger K."/>
            <person name="Skelton S."/>
            <person name="Squares S."/>
            <person name="Squares R."/>
            <person name="Sulston J.E."/>
            <person name="Taylor K."/>
            <person name="Whitehead S."/>
            <person name="Barrell B.G."/>
        </authorList>
    </citation>
    <scope>NUCLEOTIDE SEQUENCE [LARGE SCALE GENOMIC DNA]</scope>
    <source>
        <strain>ATCC 25618 / H37Rv</strain>
    </source>
</reference>
<comment type="similarity">
    <text evidence="2">To M.tuberculosis Rv1405c.</text>
</comment>
<evidence type="ECO:0000255" key="1"/>
<evidence type="ECO:0000305" key="2"/>